<protein>
    <recommendedName>
        <fullName evidence="1">Methyl-branched lipid omega-hydroxylase</fullName>
        <ecNumber evidence="1">1.14.15.14</ecNumber>
    </recommendedName>
    <alternativeName>
        <fullName evidence="1">Cholest-4-en-3-one C26-monooxygenase</fullName>
    </alternativeName>
    <alternativeName>
        <fullName evidence="1">Cholest-4-en-3-one C26-monooxygenase [(25R)-3-oxocholest-4-en-26-oate forming]</fullName>
    </alternativeName>
    <alternativeName>
        <fullName evidence="1">Cholesterol C26-monooxygenase</fullName>
    </alternativeName>
    <alternativeName>
        <fullName evidence="1">Cholesterol C26-monooxygenase [(25R)-3beta-hydroxycholest-5-en-26-oate forming]</fullName>
    </alternativeName>
    <alternativeName>
        <fullName evidence="1">Cytochrome P450 124</fullName>
    </alternativeName>
    <alternativeName>
        <fullName evidence="1">Steroid C26-monooxygenase</fullName>
        <ecNumber evidence="1">1.14.15.28</ecNumber>
    </alternativeName>
    <alternativeName>
        <fullName evidence="1">Steroid C27-monooxygenase</fullName>
    </alternativeName>
</protein>
<dbReference type="EC" id="1.14.15.14" evidence="1"/>
<dbReference type="EC" id="1.14.15.28" evidence="1"/>
<dbReference type="EMBL" id="AE000516">
    <property type="protein sequence ID" value="AAK46610.1"/>
    <property type="molecule type" value="Genomic_DNA"/>
</dbReference>
<dbReference type="PIR" id="F70729">
    <property type="entry name" value="F70729"/>
</dbReference>
<dbReference type="RefSeq" id="WP_003917608.1">
    <property type="nucleotide sequence ID" value="NZ_KK341227.1"/>
</dbReference>
<dbReference type="SMR" id="P9WPP2"/>
<dbReference type="KEGG" id="mtc:MT2328"/>
<dbReference type="PATRIC" id="fig|83331.31.peg.2503"/>
<dbReference type="HOGENOM" id="CLU_033716_0_0_11"/>
<dbReference type="UniPathway" id="UPA01022"/>
<dbReference type="Proteomes" id="UP000001020">
    <property type="component" value="Chromosome"/>
</dbReference>
<dbReference type="GO" id="GO:0036199">
    <property type="term" value="F:cholest-4-en-3-one 26-monooxygenase activity"/>
    <property type="evidence" value="ECO:0000250"/>
    <property type="project" value="UniProtKB"/>
</dbReference>
<dbReference type="GO" id="GO:0031073">
    <property type="term" value="F:cholesterol 26-hydroxylase activity"/>
    <property type="evidence" value="ECO:0000250"/>
    <property type="project" value="UniProtKB"/>
</dbReference>
<dbReference type="GO" id="GO:0020037">
    <property type="term" value="F:heme binding"/>
    <property type="evidence" value="ECO:0000250"/>
    <property type="project" value="UniProtKB"/>
</dbReference>
<dbReference type="GO" id="GO:0005506">
    <property type="term" value="F:iron ion binding"/>
    <property type="evidence" value="ECO:0007669"/>
    <property type="project" value="InterPro"/>
</dbReference>
<dbReference type="GO" id="GO:0070402">
    <property type="term" value="F:NADPH binding"/>
    <property type="evidence" value="ECO:0000250"/>
    <property type="project" value="UniProtKB"/>
</dbReference>
<dbReference type="GO" id="GO:0006707">
    <property type="term" value="P:cholesterol catabolic process"/>
    <property type="evidence" value="ECO:0007669"/>
    <property type="project" value="TreeGrafter"/>
</dbReference>
<dbReference type="GO" id="GO:0010430">
    <property type="term" value="P:fatty acid omega-oxidation"/>
    <property type="evidence" value="ECO:0000250"/>
    <property type="project" value="UniProtKB"/>
</dbReference>
<dbReference type="GO" id="GO:0097089">
    <property type="term" value="P:methyl-branched fatty acid metabolic process"/>
    <property type="evidence" value="ECO:0000250"/>
    <property type="project" value="UniProtKB"/>
</dbReference>
<dbReference type="CDD" id="cd11033">
    <property type="entry name" value="CYP142-like"/>
    <property type="match status" value="1"/>
</dbReference>
<dbReference type="FunFam" id="1.10.630.10:FF:000018">
    <property type="entry name" value="Cytochrome P450 monooxygenase"/>
    <property type="match status" value="1"/>
</dbReference>
<dbReference type="Gene3D" id="1.10.630.10">
    <property type="entry name" value="Cytochrome P450"/>
    <property type="match status" value="1"/>
</dbReference>
<dbReference type="InterPro" id="IPR001128">
    <property type="entry name" value="Cyt_P450"/>
</dbReference>
<dbReference type="InterPro" id="IPR002397">
    <property type="entry name" value="Cyt_P450_B"/>
</dbReference>
<dbReference type="InterPro" id="IPR036396">
    <property type="entry name" value="Cyt_P450_sf"/>
</dbReference>
<dbReference type="PANTHER" id="PTHR46696:SF4">
    <property type="entry name" value="BIOTIN BIOSYNTHESIS CYTOCHROME P450"/>
    <property type="match status" value="1"/>
</dbReference>
<dbReference type="PANTHER" id="PTHR46696">
    <property type="entry name" value="P450, PUTATIVE (EUROFUNG)-RELATED"/>
    <property type="match status" value="1"/>
</dbReference>
<dbReference type="Pfam" id="PF00067">
    <property type="entry name" value="p450"/>
    <property type="match status" value="2"/>
</dbReference>
<dbReference type="PRINTS" id="PR00359">
    <property type="entry name" value="BP450"/>
</dbReference>
<dbReference type="SUPFAM" id="SSF48264">
    <property type="entry name" value="Cytochrome P450"/>
    <property type="match status" value="1"/>
</dbReference>
<sequence>MGLNTAIATRVNGTPPPEVPIAGIELGSLDFWALDDDVRDGAFATLRREAPISFWPTIELPGFVAGNGHWALTKNDDVFYASRHPDIFSSYPNITINDQTPELAEYFGSMIVLDDPRHQRLRSIVSRAFTPKVVARIEAAVRDRAHRLVSSMIANNPDRQADLVSELAGPLPLQIICDMMGIPKADHQRIFHWTNVILGFGDPDLATDFDEFMQVSADIGAYATALAEDRRVNHHDDLTSSLVEAEVDGERLSSREIASFFILLVVAGNETTRNAITHGVLALSRYPEQRDRWWSDFDGLAPTAVEEIVRWASPVVYMRRTLTQDIELRGTKMAAGDKVSLWYCSANRDESKFADPWTFDLARNPNPHLGFGGGGAHFCLGANLARREIRVAFDELRRQMPDVVATEEPARLLSQFIHGIKTLPVTWS</sequence>
<evidence type="ECO:0000250" key="1">
    <source>
        <dbReference type="UniProtKB" id="P9WPP3"/>
    </source>
</evidence>
<evidence type="ECO:0000305" key="2"/>
<name>CP124_MYCTO</name>
<accession>P9WPP2</accession>
<accession>L0TBS5</accession>
<accession>P0A516</accession>
<accession>Q50696</accession>
<proteinExistence type="inferred from homology"/>
<gene>
    <name type="primary">cyp124</name>
    <name type="ordered locus">MT2328</name>
</gene>
<organism>
    <name type="scientific">Mycobacterium tuberculosis (strain CDC 1551 / Oshkosh)</name>
    <dbReference type="NCBI Taxonomy" id="83331"/>
    <lineage>
        <taxon>Bacteria</taxon>
        <taxon>Bacillati</taxon>
        <taxon>Actinomycetota</taxon>
        <taxon>Actinomycetes</taxon>
        <taxon>Mycobacteriales</taxon>
        <taxon>Mycobacteriaceae</taxon>
        <taxon>Mycobacterium</taxon>
        <taxon>Mycobacterium tuberculosis complex</taxon>
    </lineage>
</organism>
<comment type="function">
    <text evidence="1">Primarily hydroxylates the omega-carbon of a number of methyl-branched lipids, including (2E,6E)-farnesol, phytanate, geranylgeraniol, 15-methylpalmitate and (2E,6E)-farnesyl diphosphate. Also catalyzes the sequential oxidation of the terminal methyl of cholest-4-en-3-one into (25R)-26-hydroxycholest-4-en-3-one (alcohol), (25R)-26-oxocholest-4-en-3-one (aldehyde), to finally yield the carboxylic acid (25R)-3-oxocholest-4-en-26-oate. Also able to sequentially oxidize cholesterol itself, not only cholest-4-en-3-one.</text>
</comment>
<comment type="catalytic activity">
    <reaction evidence="1">
        <text>a methyl-branched lipid + O2 + 2 reduced ferredoxin [iron-sulfur] cluster + 2 H(+) = an omega-hydroxy-methyl-branched lipid + H2O + 2 oxidized ferredoxin [iron-sulfur] cluster.</text>
        <dbReference type="EC" id="1.14.15.14"/>
    </reaction>
</comment>
<comment type="catalytic activity">
    <reaction evidence="1">
        <text>cholest-4-en-3-one + 6 reduced [2Fe-2S]-[ferredoxin] + 3 O2 + 5 H(+) = (25R)-3-oxocholest-4-en-26-oate + 6 oxidized [2Fe-2S]-[ferredoxin] + 4 H2O</text>
        <dbReference type="Rhea" id="RHEA:49996"/>
        <dbReference type="Rhea" id="RHEA-COMP:10000"/>
        <dbReference type="Rhea" id="RHEA-COMP:10001"/>
        <dbReference type="ChEBI" id="CHEBI:15377"/>
        <dbReference type="ChEBI" id="CHEBI:15378"/>
        <dbReference type="ChEBI" id="CHEBI:15379"/>
        <dbReference type="ChEBI" id="CHEBI:16175"/>
        <dbReference type="ChEBI" id="CHEBI:33737"/>
        <dbReference type="ChEBI" id="CHEBI:33738"/>
        <dbReference type="ChEBI" id="CHEBI:71570"/>
        <dbReference type="EC" id="1.14.15.28"/>
    </reaction>
</comment>
<comment type="cofactor">
    <cofactor evidence="1">
        <name>heme</name>
        <dbReference type="ChEBI" id="CHEBI:30413"/>
    </cofactor>
</comment>
<comment type="pathway">
    <text evidence="1">Lipid metabolism; branched-chain fatty acid metabolism.</text>
</comment>
<comment type="similarity">
    <text evidence="2">Belongs to the cytochrome P450 family.</text>
</comment>
<reference key="1">
    <citation type="journal article" date="2002" name="J. Bacteriol.">
        <title>Whole-genome comparison of Mycobacterium tuberculosis clinical and laboratory strains.</title>
        <authorList>
            <person name="Fleischmann R.D."/>
            <person name="Alland D."/>
            <person name="Eisen J.A."/>
            <person name="Carpenter L."/>
            <person name="White O."/>
            <person name="Peterson J.D."/>
            <person name="DeBoy R.T."/>
            <person name="Dodson R.J."/>
            <person name="Gwinn M.L."/>
            <person name="Haft D.H."/>
            <person name="Hickey E.K."/>
            <person name="Kolonay J.F."/>
            <person name="Nelson W.C."/>
            <person name="Umayam L.A."/>
            <person name="Ermolaeva M.D."/>
            <person name="Salzberg S.L."/>
            <person name="Delcher A."/>
            <person name="Utterback T.R."/>
            <person name="Weidman J.F."/>
            <person name="Khouri H.M."/>
            <person name="Gill J."/>
            <person name="Mikula A."/>
            <person name="Bishai W."/>
            <person name="Jacobs W.R. Jr."/>
            <person name="Venter J.C."/>
            <person name="Fraser C.M."/>
        </authorList>
    </citation>
    <scope>NUCLEOTIDE SEQUENCE [LARGE SCALE GENOMIC DNA]</scope>
    <source>
        <strain>CDC 1551 / Oshkosh</strain>
    </source>
</reference>
<feature type="chain" id="PRO_0000426917" description="Methyl-branched lipid omega-hydroxylase">
    <location>
        <begin position="1"/>
        <end position="428"/>
    </location>
</feature>
<feature type="binding site" description="axial binding residue" evidence="1">
    <location>
        <position position="379"/>
    </location>
    <ligand>
        <name>heme</name>
        <dbReference type="ChEBI" id="CHEBI:30413"/>
    </ligand>
    <ligandPart>
        <name>Fe</name>
        <dbReference type="ChEBI" id="CHEBI:18248"/>
    </ligandPart>
</feature>
<keyword id="KW-0276">Fatty acid metabolism</keyword>
<keyword id="KW-0349">Heme</keyword>
<keyword id="KW-0408">Iron</keyword>
<keyword id="KW-0443">Lipid metabolism</keyword>
<keyword id="KW-0479">Metal-binding</keyword>
<keyword id="KW-0503">Monooxygenase</keyword>
<keyword id="KW-0521">NADP</keyword>
<keyword id="KW-0560">Oxidoreductase</keyword>
<keyword id="KW-1185">Reference proteome</keyword>